<sequence>MSTIIMDLCSYTRLGLSGYLVSRGVKKREINDIETVDELAIACGAHQPSVVFINEDCFIHTPSDSQQIKQIINQHPDTLFIVFMAIANVHFDEYLLVRKNLLISSKSIKPDSLDTLLGDILKKESGISGTINLPTLSLSRTESSMLRMWMEGQGTIQISDRMNIKAKTVSSHKGNIKRKIKTHNKQVIYHVVRLTDNVTNGIFVNMR</sequence>
<name>RCSA_SALTY</name>
<keyword id="KW-0238">DNA-binding</keyword>
<keyword id="KW-1185">Reference proteome</keyword>
<keyword id="KW-0716">Sensory transduction</keyword>
<keyword id="KW-0804">Transcription</keyword>
<keyword id="KW-0805">Transcription regulation</keyword>
<accession>P54698</accession>
<proteinExistence type="inferred from homology"/>
<comment type="function">
    <text evidence="1">Component of the Rcs signaling system, which controls transcription of numerous genes. Binds, with RcsB, to the RcsAB box to regulate expression of genes.</text>
</comment>
<comment type="subunit">
    <text evidence="1">Interacts with RcsB.</text>
</comment>
<comment type="similarity">
    <text evidence="1">Belongs to the RcsA family.</text>
</comment>
<feature type="chain" id="PRO_0000184181" description="Transcriptional regulatory protein RcsA">
    <location>
        <begin position="1"/>
        <end position="207"/>
    </location>
</feature>
<feature type="domain" description="HTH luxR-type" evidence="1">
    <location>
        <begin position="131"/>
        <end position="196"/>
    </location>
</feature>
<feature type="DNA-binding region" description="H-T-H motif" evidence="1">
    <location>
        <begin position="155"/>
        <end position="174"/>
    </location>
</feature>
<reference key="1">
    <citation type="journal article" date="2001" name="Nature">
        <title>Complete genome sequence of Salmonella enterica serovar Typhimurium LT2.</title>
        <authorList>
            <person name="McClelland M."/>
            <person name="Sanderson K.E."/>
            <person name="Spieth J."/>
            <person name="Clifton S.W."/>
            <person name="Latreille P."/>
            <person name="Courtney L."/>
            <person name="Porwollik S."/>
            <person name="Ali J."/>
            <person name="Dante M."/>
            <person name="Du F."/>
            <person name="Hou S."/>
            <person name="Layman D."/>
            <person name="Leonard S."/>
            <person name="Nguyen C."/>
            <person name="Scott K."/>
            <person name="Holmes A."/>
            <person name="Grewal N."/>
            <person name="Mulvaney E."/>
            <person name="Ryan E."/>
            <person name="Sun H."/>
            <person name="Florea L."/>
            <person name="Miller W."/>
            <person name="Stoneking T."/>
            <person name="Nhan M."/>
            <person name="Waterston R."/>
            <person name="Wilson R.K."/>
        </authorList>
    </citation>
    <scope>NUCLEOTIDE SEQUENCE [LARGE SCALE GENOMIC DNA]</scope>
    <source>
        <strain>LT2 / SGSC1412 / ATCC 700720</strain>
    </source>
</reference>
<reference key="2">
    <citation type="journal article" date="1997" name="J. Bacteriol.">
        <title>The FliO, FliP, FliQ, and FliR proteins of Salmonella typhimurium: putative components for flagellar assembly.</title>
        <authorList>
            <person name="Ohnishi K."/>
            <person name="Fan F."/>
            <person name="Schoenhals G.J."/>
            <person name="Kihara M."/>
            <person name="Macnab R.M."/>
        </authorList>
    </citation>
    <scope>NUCLEOTIDE SEQUENCE [GENOMIC DNA] OF 1-65</scope>
    <source>
        <strain>LT2</strain>
    </source>
</reference>
<gene>
    <name evidence="1" type="primary">rcsA</name>
    <name type="ordered locus">STM1982</name>
</gene>
<evidence type="ECO:0000255" key="1">
    <source>
        <dbReference type="HAMAP-Rule" id="MF_00982"/>
    </source>
</evidence>
<organism>
    <name type="scientific">Salmonella typhimurium (strain LT2 / SGSC1412 / ATCC 700720)</name>
    <dbReference type="NCBI Taxonomy" id="99287"/>
    <lineage>
        <taxon>Bacteria</taxon>
        <taxon>Pseudomonadati</taxon>
        <taxon>Pseudomonadota</taxon>
        <taxon>Gammaproteobacteria</taxon>
        <taxon>Enterobacterales</taxon>
        <taxon>Enterobacteriaceae</taxon>
        <taxon>Salmonella</taxon>
    </lineage>
</organism>
<dbReference type="EMBL" id="AE006468">
    <property type="protein sequence ID" value="AAL20894.1"/>
    <property type="molecule type" value="Genomic_DNA"/>
</dbReference>
<dbReference type="EMBL" id="L49021">
    <property type="protein sequence ID" value="AAB81322.1"/>
    <property type="molecule type" value="Genomic_DNA"/>
</dbReference>
<dbReference type="PIR" id="S78701">
    <property type="entry name" value="S78701"/>
</dbReference>
<dbReference type="RefSeq" id="NP_460935.1">
    <property type="nucleotide sequence ID" value="NC_003197.2"/>
</dbReference>
<dbReference type="RefSeq" id="WP_000103974.1">
    <property type="nucleotide sequence ID" value="NC_003197.2"/>
</dbReference>
<dbReference type="SMR" id="P54698"/>
<dbReference type="STRING" id="99287.STM1982"/>
<dbReference type="PaxDb" id="99287-STM1982"/>
<dbReference type="GeneID" id="1253503"/>
<dbReference type="KEGG" id="stm:STM1982"/>
<dbReference type="PATRIC" id="fig|99287.12.peg.2099"/>
<dbReference type="HOGENOM" id="CLU_105065_0_0_6"/>
<dbReference type="OMA" id="MLRMWMS"/>
<dbReference type="PhylomeDB" id="P54698"/>
<dbReference type="BioCyc" id="SENT99287:STM1982-MONOMER"/>
<dbReference type="PHI-base" id="PHI:3013"/>
<dbReference type="Proteomes" id="UP000001014">
    <property type="component" value="Chromosome"/>
</dbReference>
<dbReference type="GO" id="GO:0003677">
    <property type="term" value="F:DNA binding"/>
    <property type="evidence" value="ECO:0007669"/>
    <property type="project" value="UniProtKB-UniRule"/>
</dbReference>
<dbReference type="GO" id="GO:0006355">
    <property type="term" value="P:regulation of DNA-templated transcription"/>
    <property type="evidence" value="ECO:0007669"/>
    <property type="project" value="UniProtKB-UniRule"/>
</dbReference>
<dbReference type="CDD" id="cd06170">
    <property type="entry name" value="LuxR_C_like"/>
    <property type="match status" value="1"/>
</dbReference>
<dbReference type="Gene3D" id="1.10.10.10">
    <property type="entry name" value="Winged helix-like DNA-binding domain superfamily/Winged helix DNA-binding domain"/>
    <property type="match status" value="1"/>
</dbReference>
<dbReference type="HAMAP" id="MF_00982">
    <property type="entry name" value="RcsA"/>
    <property type="match status" value="1"/>
</dbReference>
<dbReference type="InterPro" id="IPR030866">
    <property type="entry name" value="RcsA"/>
</dbReference>
<dbReference type="InterPro" id="IPR016032">
    <property type="entry name" value="Sig_transdc_resp-reg_C-effctor"/>
</dbReference>
<dbReference type="InterPro" id="IPR000792">
    <property type="entry name" value="Tscrpt_reg_LuxR_C"/>
</dbReference>
<dbReference type="InterPro" id="IPR036388">
    <property type="entry name" value="WH-like_DNA-bd_sf"/>
</dbReference>
<dbReference type="NCBIfam" id="NF011940">
    <property type="entry name" value="PRK15411.1"/>
    <property type="match status" value="1"/>
</dbReference>
<dbReference type="Pfam" id="PF00196">
    <property type="entry name" value="GerE"/>
    <property type="match status" value="1"/>
</dbReference>
<dbReference type="PRINTS" id="PR00038">
    <property type="entry name" value="HTHLUXR"/>
</dbReference>
<dbReference type="SMART" id="SM00421">
    <property type="entry name" value="HTH_LUXR"/>
    <property type="match status" value="1"/>
</dbReference>
<dbReference type="SUPFAM" id="SSF46894">
    <property type="entry name" value="C-terminal effector domain of the bipartite response regulators"/>
    <property type="match status" value="1"/>
</dbReference>
<dbReference type="PROSITE" id="PS00622">
    <property type="entry name" value="HTH_LUXR_1"/>
    <property type="match status" value="1"/>
</dbReference>
<dbReference type="PROSITE" id="PS50043">
    <property type="entry name" value="HTH_LUXR_2"/>
    <property type="match status" value="1"/>
</dbReference>
<protein>
    <recommendedName>
        <fullName evidence="1">Transcriptional regulatory protein RcsA</fullName>
    </recommendedName>
</protein>